<dbReference type="EC" id="6.1.1.11" evidence="1"/>
<dbReference type="EMBL" id="DQ489736">
    <property type="protein sequence ID" value="ACA83432.1"/>
    <property type="molecule type" value="Genomic_DNA"/>
</dbReference>
<dbReference type="RefSeq" id="WP_004904446.1">
    <property type="nucleotide sequence ID" value="NC_010471.1"/>
</dbReference>
<dbReference type="SMR" id="B1MW28"/>
<dbReference type="STRING" id="349519.LCK_01609"/>
<dbReference type="KEGG" id="lci:LCK_01609"/>
<dbReference type="eggNOG" id="COG0172">
    <property type="taxonomic scope" value="Bacteria"/>
</dbReference>
<dbReference type="HOGENOM" id="CLU_023797_1_1_9"/>
<dbReference type="OrthoDB" id="9804647at2"/>
<dbReference type="UniPathway" id="UPA00906">
    <property type="reaction ID" value="UER00895"/>
</dbReference>
<dbReference type="Proteomes" id="UP000002166">
    <property type="component" value="Chromosome"/>
</dbReference>
<dbReference type="GO" id="GO:0005737">
    <property type="term" value="C:cytoplasm"/>
    <property type="evidence" value="ECO:0007669"/>
    <property type="project" value="UniProtKB-SubCell"/>
</dbReference>
<dbReference type="GO" id="GO:0005524">
    <property type="term" value="F:ATP binding"/>
    <property type="evidence" value="ECO:0007669"/>
    <property type="project" value="UniProtKB-UniRule"/>
</dbReference>
<dbReference type="GO" id="GO:0140096">
    <property type="term" value="F:catalytic activity, acting on a protein"/>
    <property type="evidence" value="ECO:0007669"/>
    <property type="project" value="UniProtKB-ARBA"/>
</dbReference>
<dbReference type="GO" id="GO:0004828">
    <property type="term" value="F:serine-tRNA ligase activity"/>
    <property type="evidence" value="ECO:0007669"/>
    <property type="project" value="UniProtKB-UniRule"/>
</dbReference>
<dbReference type="GO" id="GO:0016740">
    <property type="term" value="F:transferase activity"/>
    <property type="evidence" value="ECO:0007669"/>
    <property type="project" value="UniProtKB-ARBA"/>
</dbReference>
<dbReference type="GO" id="GO:0016260">
    <property type="term" value="P:selenocysteine biosynthetic process"/>
    <property type="evidence" value="ECO:0007669"/>
    <property type="project" value="UniProtKB-UniRule"/>
</dbReference>
<dbReference type="GO" id="GO:0006434">
    <property type="term" value="P:seryl-tRNA aminoacylation"/>
    <property type="evidence" value="ECO:0007669"/>
    <property type="project" value="UniProtKB-UniRule"/>
</dbReference>
<dbReference type="CDD" id="cd00770">
    <property type="entry name" value="SerRS_core"/>
    <property type="match status" value="1"/>
</dbReference>
<dbReference type="Gene3D" id="3.30.930.10">
    <property type="entry name" value="Bira Bifunctional Protein, Domain 2"/>
    <property type="match status" value="1"/>
</dbReference>
<dbReference type="Gene3D" id="1.10.287.40">
    <property type="entry name" value="Serine-tRNA synthetase, tRNA binding domain"/>
    <property type="match status" value="1"/>
</dbReference>
<dbReference type="HAMAP" id="MF_00176">
    <property type="entry name" value="Ser_tRNA_synth_type1"/>
    <property type="match status" value="1"/>
</dbReference>
<dbReference type="InterPro" id="IPR002314">
    <property type="entry name" value="aa-tRNA-synt_IIb"/>
</dbReference>
<dbReference type="InterPro" id="IPR006195">
    <property type="entry name" value="aa-tRNA-synth_II"/>
</dbReference>
<dbReference type="InterPro" id="IPR045864">
    <property type="entry name" value="aa-tRNA-synth_II/BPL/LPL"/>
</dbReference>
<dbReference type="InterPro" id="IPR002317">
    <property type="entry name" value="Ser-tRNA-ligase_type_1"/>
</dbReference>
<dbReference type="InterPro" id="IPR015866">
    <property type="entry name" value="Ser-tRNA-synth_1_N"/>
</dbReference>
<dbReference type="InterPro" id="IPR042103">
    <property type="entry name" value="SerRS_1_N_sf"/>
</dbReference>
<dbReference type="InterPro" id="IPR033729">
    <property type="entry name" value="SerRS_core"/>
</dbReference>
<dbReference type="InterPro" id="IPR010978">
    <property type="entry name" value="tRNA-bd_arm"/>
</dbReference>
<dbReference type="NCBIfam" id="TIGR00414">
    <property type="entry name" value="serS"/>
    <property type="match status" value="1"/>
</dbReference>
<dbReference type="PANTHER" id="PTHR43697:SF1">
    <property type="entry name" value="SERINE--TRNA LIGASE"/>
    <property type="match status" value="1"/>
</dbReference>
<dbReference type="PANTHER" id="PTHR43697">
    <property type="entry name" value="SERYL-TRNA SYNTHETASE"/>
    <property type="match status" value="1"/>
</dbReference>
<dbReference type="Pfam" id="PF02403">
    <property type="entry name" value="Seryl_tRNA_N"/>
    <property type="match status" value="1"/>
</dbReference>
<dbReference type="Pfam" id="PF00587">
    <property type="entry name" value="tRNA-synt_2b"/>
    <property type="match status" value="1"/>
</dbReference>
<dbReference type="PIRSF" id="PIRSF001529">
    <property type="entry name" value="Ser-tRNA-synth_IIa"/>
    <property type="match status" value="1"/>
</dbReference>
<dbReference type="PRINTS" id="PR00981">
    <property type="entry name" value="TRNASYNTHSER"/>
</dbReference>
<dbReference type="SUPFAM" id="SSF55681">
    <property type="entry name" value="Class II aaRS and biotin synthetases"/>
    <property type="match status" value="1"/>
</dbReference>
<dbReference type="SUPFAM" id="SSF46589">
    <property type="entry name" value="tRNA-binding arm"/>
    <property type="match status" value="1"/>
</dbReference>
<dbReference type="PROSITE" id="PS50862">
    <property type="entry name" value="AA_TRNA_LIGASE_II"/>
    <property type="match status" value="1"/>
</dbReference>
<accession>B1MW28</accession>
<sequence length="436" mass="48861">MLDIKYLRKNVAEATRRLQDRGIESEKLTTLLSLDKARREAIQQVESLKAQRNEVSDKIAYAKRNKTDASEAILAMQEVGSKIKALDARQASLDMEVKNLAAHLPNLAASDVPVGPDEAANVEQRVWEPKTYGQRLKAHQEAPEWLKAHYEVGETLGILDFERGAKVSGARFLYYVGDGARLERAVYNFMLDEHRQEGYTEMITPIVVNDAAMFGTGQYPKFQDDAYRVEGLEQTYIPTAEVPLTNYYSGETLPAEDLPIKFTALSPSFRKEAGAAGKDTRGLIRLHQFNKVEMVKFTKPEQSYEELESMTANAENILQKLGLPYHVIMLSTGDMGFSAAKTYDVEVWMPQQQVYREISSVSNTEDFQARRMHITYRNEAGQLALVHTLNGSGLAVGRTVAAILENYQNPDGSVTVPEVLRPYLGGQDKLMATPHH</sequence>
<gene>
    <name evidence="1" type="primary">serS</name>
    <name type="ordered locus">LCK_01609</name>
</gene>
<name>SYS_LEUCK</name>
<comment type="function">
    <text evidence="1">Catalyzes the attachment of serine to tRNA(Ser). Is also able to aminoacylate tRNA(Sec) with serine, to form the misacylated tRNA L-seryl-tRNA(Sec), which will be further converted into selenocysteinyl-tRNA(Sec).</text>
</comment>
<comment type="catalytic activity">
    <reaction evidence="1">
        <text>tRNA(Ser) + L-serine + ATP = L-seryl-tRNA(Ser) + AMP + diphosphate + H(+)</text>
        <dbReference type="Rhea" id="RHEA:12292"/>
        <dbReference type="Rhea" id="RHEA-COMP:9669"/>
        <dbReference type="Rhea" id="RHEA-COMP:9703"/>
        <dbReference type="ChEBI" id="CHEBI:15378"/>
        <dbReference type="ChEBI" id="CHEBI:30616"/>
        <dbReference type="ChEBI" id="CHEBI:33019"/>
        <dbReference type="ChEBI" id="CHEBI:33384"/>
        <dbReference type="ChEBI" id="CHEBI:78442"/>
        <dbReference type="ChEBI" id="CHEBI:78533"/>
        <dbReference type="ChEBI" id="CHEBI:456215"/>
        <dbReference type="EC" id="6.1.1.11"/>
    </reaction>
</comment>
<comment type="catalytic activity">
    <reaction evidence="1">
        <text>tRNA(Sec) + L-serine + ATP = L-seryl-tRNA(Sec) + AMP + diphosphate + H(+)</text>
        <dbReference type="Rhea" id="RHEA:42580"/>
        <dbReference type="Rhea" id="RHEA-COMP:9742"/>
        <dbReference type="Rhea" id="RHEA-COMP:10128"/>
        <dbReference type="ChEBI" id="CHEBI:15378"/>
        <dbReference type="ChEBI" id="CHEBI:30616"/>
        <dbReference type="ChEBI" id="CHEBI:33019"/>
        <dbReference type="ChEBI" id="CHEBI:33384"/>
        <dbReference type="ChEBI" id="CHEBI:78442"/>
        <dbReference type="ChEBI" id="CHEBI:78533"/>
        <dbReference type="ChEBI" id="CHEBI:456215"/>
        <dbReference type="EC" id="6.1.1.11"/>
    </reaction>
</comment>
<comment type="pathway">
    <text evidence="1">Aminoacyl-tRNA biosynthesis; selenocysteinyl-tRNA(Sec) biosynthesis; L-seryl-tRNA(Sec) from L-serine and tRNA(Sec): step 1/1.</text>
</comment>
<comment type="subunit">
    <text evidence="1">Homodimer. The tRNA molecule binds across the dimer.</text>
</comment>
<comment type="subcellular location">
    <subcellularLocation>
        <location evidence="1">Cytoplasm</location>
    </subcellularLocation>
</comment>
<comment type="domain">
    <text evidence="1">Consists of two distinct domains, a catalytic core and a N-terminal extension that is involved in tRNA binding.</text>
</comment>
<comment type="similarity">
    <text evidence="1">Belongs to the class-II aminoacyl-tRNA synthetase family. Type-1 seryl-tRNA synthetase subfamily.</text>
</comment>
<feature type="chain" id="PRO_1000098089" description="Serine--tRNA ligase">
    <location>
        <begin position="1"/>
        <end position="436"/>
    </location>
</feature>
<feature type="binding site" evidence="1">
    <location>
        <begin position="239"/>
        <end position="241"/>
    </location>
    <ligand>
        <name>L-serine</name>
        <dbReference type="ChEBI" id="CHEBI:33384"/>
    </ligand>
</feature>
<feature type="binding site" evidence="1">
    <location>
        <begin position="270"/>
        <end position="272"/>
    </location>
    <ligand>
        <name>ATP</name>
        <dbReference type="ChEBI" id="CHEBI:30616"/>
    </ligand>
</feature>
<feature type="binding site" evidence="1">
    <location>
        <position position="293"/>
    </location>
    <ligand>
        <name>L-serine</name>
        <dbReference type="ChEBI" id="CHEBI:33384"/>
    </ligand>
</feature>
<feature type="binding site" evidence="1">
    <location>
        <begin position="357"/>
        <end position="360"/>
    </location>
    <ligand>
        <name>ATP</name>
        <dbReference type="ChEBI" id="CHEBI:30616"/>
    </ligand>
</feature>
<feature type="binding site" evidence="1">
    <location>
        <position position="392"/>
    </location>
    <ligand>
        <name>L-serine</name>
        <dbReference type="ChEBI" id="CHEBI:33384"/>
    </ligand>
</feature>
<reference key="1">
    <citation type="journal article" date="2008" name="J. Bacteriol.">
        <title>Complete genome sequence of Leuconostoc citreum KM20.</title>
        <authorList>
            <person name="Kim J.F."/>
            <person name="Jeong H."/>
            <person name="Lee J.-S."/>
            <person name="Choi S.-H."/>
            <person name="Ha M."/>
            <person name="Hur C.-G."/>
            <person name="Kim J.-S."/>
            <person name="Lee S."/>
            <person name="Park H.-S."/>
            <person name="Park Y.-H."/>
            <person name="Oh T.K."/>
        </authorList>
    </citation>
    <scope>NUCLEOTIDE SEQUENCE [LARGE SCALE GENOMIC DNA]</scope>
    <source>
        <strain>KM20</strain>
    </source>
</reference>
<protein>
    <recommendedName>
        <fullName evidence="1">Serine--tRNA ligase</fullName>
        <ecNumber evidence="1">6.1.1.11</ecNumber>
    </recommendedName>
    <alternativeName>
        <fullName evidence="1">Seryl-tRNA synthetase</fullName>
        <shortName evidence="1">SerRS</shortName>
    </alternativeName>
    <alternativeName>
        <fullName evidence="1">Seryl-tRNA(Ser/Sec) synthetase</fullName>
    </alternativeName>
</protein>
<keyword id="KW-0030">Aminoacyl-tRNA synthetase</keyword>
<keyword id="KW-0067">ATP-binding</keyword>
<keyword id="KW-0963">Cytoplasm</keyword>
<keyword id="KW-0436">Ligase</keyword>
<keyword id="KW-0547">Nucleotide-binding</keyword>
<keyword id="KW-0648">Protein biosynthesis</keyword>
<keyword id="KW-1185">Reference proteome</keyword>
<proteinExistence type="inferred from homology"/>
<evidence type="ECO:0000255" key="1">
    <source>
        <dbReference type="HAMAP-Rule" id="MF_00176"/>
    </source>
</evidence>
<organism>
    <name type="scientific">Leuconostoc citreum (strain KM20)</name>
    <dbReference type="NCBI Taxonomy" id="349519"/>
    <lineage>
        <taxon>Bacteria</taxon>
        <taxon>Bacillati</taxon>
        <taxon>Bacillota</taxon>
        <taxon>Bacilli</taxon>
        <taxon>Lactobacillales</taxon>
        <taxon>Lactobacillaceae</taxon>
        <taxon>Leuconostoc</taxon>
    </lineage>
</organism>